<name>RAB6B_MOUSE</name>
<comment type="function">
    <text evidence="3">The small GTPases Rab are key regulators of intracellular membrane trafficking, from the formation of transport vesicles to their fusion with membranes. Rabs cycle between active GTP-bound and inactive GDP-bound states. In their active state, drive transport of vesicular carriers from donor organelles to acceptor organelles to regulate the membrane traffic that maintains organelle identity and morphology. Recruits VPS13B to the Golgi membrane. Regulates the compacted morphology of the Golgi. Seems to have a role in retrograde membrane traffic at the level of the Golgi complex. May function in retrograde transport in neuronal cells. Plays a role in neuron projection development.</text>
</comment>
<comment type="catalytic activity">
    <reaction evidence="3">
        <text>GTP + H2O = GDP + phosphate + H(+)</text>
        <dbReference type="Rhea" id="RHEA:19669"/>
        <dbReference type="ChEBI" id="CHEBI:15377"/>
        <dbReference type="ChEBI" id="CHEBI:15378"/>
        <dbReference type="ChEBI" id="CHEBI:37565"/>
        <dbReference type="ChEBI" id="CHEBI:43474"/>
        <dbReference type="ChEBI" id="CHEBI:58189"/>
        <dbReference type="EC" id="3.6.5.2"/>
    </reaction>
    <physiologicalReaction direction="left-to-right" evidence="3">
        <dbReference type="Rhea" id="RHEA:19670"/>
    </physiologicalReaction>
</comment>
<comment type="cofactor">
    <cofactor evidence="3">
        <name>Mg(2+)</name>
        <dbReference type="ChEBI" id="CHEBI:18420"/>
    </cofactor>
</comment>
<comment type="activity regulation">
    <text evidence="3">Regulated by guanine nucleotide exchange factors (GEFs) which promote the exchange of bound GDP for free GTP, GTPase activating proteins (GAPs) which increase the GTP hydrolysis activity, and GDP dissociation inhibitors which inhibit the dissociation of the nucleotide from the GTPase.</text>
</comment>
<comment type="subunit">
    <text evidence="3">Interacts (GTP-bound) with BICD1 (via C-terminus); the interaction is direct. Interacts (GDP-bound) with DYNLRB1. Interacts (GTP-bound) with APBA1/MINT1 isoform 3, also called Mint1_826. Interacts (GTP-bound) with VPS13B.</text>
</comment>
<comment type="interaction">
    <interactant intactId="EBI-529766">
        <id>P61294</id>
    </interactant>
    <interactant intactId="EBI-7893170">
        <id>A0JNT9</id>
        <label>Bicdl1</label>
    </interactant>
    <organismsDiffer>false</organismsDiffer>
    <experiments>2</experiments>
</comment>
<comment type="subcellular location">
    <subcellularLocation>
        <location evidence="3">Golgi apparatus membrane</location>
        <topology evidence="4">Lipid-anchor</topology>
    </subcellularLocation>
    <subcellularLocation>
        <location evidence="3">Endoplasmic reticulum-Golgi intermediate compartment</location>
    </subcellularLocation>
    <subcellularLocation>
        <location evidence="3">Cytoplasmic vesicle</location>
    </subcellularLocation>
    <text evidence="3">Colocalizes with BICD1 at vesicular structures that align along microtubules.</text>
</comment>
<comment type="domain">
    <text evidence="3">Switch 1, switch 2 and the interswitch regions are characteristic of Rab GTPases and mediate the interactions with Rab downstream effectors. The switch regions undergo conformational changes upon nucleotide binding which drives interaction with specific sets of effector proteins, with most effectors only binding to GTP-bound Rab.</text>
</comment>
<comment type="similarity">
    <text evidence="4">Belongs to the small GTPase superfamily. Rab family.</text>
</comment>
<accession>P61294</accession>
<evidence type="ECO:0000250" key="1"/>
<evidence type="ECO:0000250" key="2">
    <source>
        <dbReference type="UniProtKB" id="P20340"/>
    </source>
</evidence>
<evidence type="ECO:0000250" key="3">
    <source>
        <dbReference type="UniProtKB" id="Q9NRW1"/>
    </source>
</evidence>
<evidence type="ECO:0000305" key="4"/>
<evidence type="ECO:0000312" key="5">
    <source>
        <dbReference type="MGI" id="MGI:107283"/>
    </source>
</evidence>
<evidence type="ECO:0007829" key="6">
    <source>
        <dbReference type="PDB" id="8IJ9"/>
    </source>
</evidence>
<protein>
    <recommendedName>
        <fullName>Ras-related protein Rab-6B</fullName>
        <ecNumber evidence="3">3.6.5.2</ecNumber>
    </recommendedName>
</protein>
<proteinExistence type="evidence at protein level"/>
<gene>
    <name evidence="5" type="primary">Rab6b</name>
    <name type="synonym">D9Bwg0185e</name>
</gene>
<sequence>MSAGGDFGNPLRKFKLVFLGEQSVGKTSLITRFMYDSFDNTYQATIGIDFLSKTMYLEDRTVRLQLWDTAGQERFRSLIPSYIRDSTVAVVVYDITNLNSFQQTSKWIDDVRTERGSDVIIMLVGNKTDLADKRQITIEEGEQRAKELSVMFIETSAKTGYNVKQLFRRVASALPGMENVQEKSKEGMIDIKLDKPQEPPASEGGCSC</sequence>
<organism>
    <name type="scientific">Mus musculus</name>
    <name type="common">Mouse</name>
    <dbReference type="NCBI Taxonomy" id="10090"/>
    <lineage>
        <taxon>Eukaryota</taxon>
        <taxon>Metazoa</taxon>
        <taxon>Chordata</taxon>
        <taxon>Craniata</taxon>
        <taxon>Vertebrata</taxon>
        <taxon>Euteleostomi</taxon>
        <taxon>Mammalia</taxon>
        <taxon>Eutheria</taxon>
        <taxon>Euarchontoglires</taxon>
        <taxon>Glires</taxon>
        <taxon>Rodentia</taxon>
        <taxon>Myomorpha</taxon>
        <taxon>Muroidea</taxon>
        <taxon>Muridae</taxon>
        <taxon>Murinae</taxon>
        <taxon>Mus</taxon>
        <taxon>Mus</taxon>
    </lineage>
</organism>
<reference key="1">
    <citation type="journal article" date="2005" name="Science">
        <title>The transcriptional landscape of the mammalian genome.</title>
        <authorList>
            <person name="Carninci P."/>
            <person name="Kasukawa T."/>
            <person name="Katayama S."/>
            <person name="Gough J."/>
            <person name="Frith M.C."/>
            <person name="Maeda N."/>
            <person name="Oyama R."/>
            <person name="Ravasi T."/>
            <person name="Lenhard B."/>
            <person name="Wells C."/>
            <person name="Kodzius R."/>
            <person name="Shimokawa K."/>
            <person name="Bajic V.B."/>
            <person name="Brenner S.E."/>
            <person name="Batalov S."/>
            <person name="Forrest A.R."/>
            <person name="Zavolan M."/>
            <person name="Davis M.J."/>
            <person name="Wilming L.G."/>
            <person name="Aidinis V."/>
            <person name="Allen J.E."/>
            <person name="Ambesi-Impiombato A."/>
            <person name="Apweiler R."/>
            <person name="Aturaliya R.N."/>
            <person name="Bailey T.L."/>
            <person name="Bansal M."/>
            <person name="Baxter L."/>
            <person name="Beisel K.W."/>
            <person name="Bersano T."/>
            <person name="Bono H."/>
            <person name="Chalk A.M."/>
            <person name="Chiu K.P."/>
            <person name="Choudhary V."/>
            <person name="Christoffels A."/>
            <person name="Clutterbuck D.R."/>
            <person name="Crowe M.L."/>
            <person name="Dalla E."/>
            <person name="Dalrymple B.P."/>
            <person name="de Bono B."/>
            <person name="Della Gatta G."/>
            <person name="di Bernardo D."/>
            <person name="Down T."/>
            <person name="Engstrom P."/>
            <person name="Fagiolini M."/>
            <person name="Faulkner G."/>
            <person name="Fletcher C.F."/>
            <person name="Fukushima T."/>
            <person name="Furuno M."/>
            <person name="Futaki S."/>
            <person name="Gariboldi M."/>
            <person name="Georgii-Hemming P."/>
            <person name="Gingeras T.R."/>
            <person name="Gojobori T."/>
            <person name="Green R.E."/>
            <person name="Gustincich S."/>
            <person name="Harbers M."/>
            <person name="Hayashi Y."/>
            <person name="Hensch T.K."/>
            <person name="Hirokawa N."/>
            <person name="Hill D."/>
            <person name="Huminiecki L."/>
            <person name="Iacono M."/>
            <person name="Ikeo K."/>
            <person name="Iwama A."/>
            <person name="Ishikawa T."/>
            <person name="Jakt M."/>
            <person name="Kanapin A."/>
            <person name="Katoh M."/>
            <person name="Kawasawa Y."/>
            <person name="Kelso J."/>
            <person name="Kitamura H."/>
            <person name="Kitano H."/>
            <person name="Kollias G."/>
            <person name="Krishnan S.P."/>
            <person name="Kruger A."/>
            <person name="Kummerfeld S.K."/>
            <person name="Kurochkin I.V."/>
            <person name="Lareau L.F."/>
            <person name="Lazarevic D."/>
            <person name="Lipovich L."/>
            <person name="Liu J."/>
            <person name="Liuni S."/>
            <person name="McWilliam S."/>
            <person name="Madan Babu M."/>
            <person name="Madera M."/>
            <person name="Marchionni L."/>
            <person name="Matsuda H."/>
            <person name="Matsuzawa S."/>
            <person name="Miki H."/>
            <person name="Mignone F."/>
            <person name="Miyake S."/>
            <person name="Morris K."/>
            <person name="Mottagui-Tabar S."/>
            <person name="Mulder N."/>
            <person name="Nakano N."/>
            <person name="Nakauchi H."/>
            <person name="Ng P."/>
            <person name="Nilsson R."/>
            <person name="Nishiguchi S."/>
            <person name="Nishikawa S."/>
            <person name="Nori F."/>
            <person name="Ohara O."/>
            <person name="Okazaki Y."/>
            <person name="Orlando V."/>
            <person name="Pang K.C."/>
            <person name="Pavan W.J."/>
            <person name="Pavesi G."/>
            <person name="Pesole G."/>
            <person name="Petrovsky N."/>
            <person name="Piazza S."/>
            <person name="Reed J."/>
            <person name="Reid J.F."/>
            <person name="Ring B.Z."/>
            <person name="Ringwald M."/>
            <person name="Rost B."/>
            <person name="Ruan Y."/>
            <person name="Salzberg S.L."/>
            <person name="Sandelin A."/>
            <person name="Schneider C."/>
            <person name="Schoenbach C."/>
            <person name="Sekiguchi K."/>
            <person name="Semple C.A."/>
            <person name="Seno S."/>
            <person name="Sessa L."/>
            <person name="Sheng Y."/>
            <person name="Shibata Y."/>
            <person name="Shimada H."/>
            <person name="Shimada K."/>
            <person name="Silva D."/>
            <person name="Sinclair B."/>
            <person name="Sperling S."/>
            <person name="Stupka E."/>
            <person name="Sugiura K."/>
            <person name="Sultana R."/>
            <person name="Takenaka Y."/>
            <person name="Taki K."/>
            <person name="Tammoja K."/>
            <person name="Tan S.L."/>
            <person name="Tang S."/>
            <person name="Taylor M.S."/>
            <person name="Tegner J."/>
            <person name="Teichmann S.A."/>
            <person name="Ueda H.R."/>
            <person name="van Nimwegen E."/>
            <person name="Verardo R."/>
            <person name="Wei C.L."/>
            <person name="Yagi K."/>
            <person name="Yamanishi H."/>
            <person name="Zabarovsky E."/>
            <person name="Zhu S."/>
            <person name="Zimmer A."/>
            <person name="Hide W."/>
            <person name="Bult C."/>
            <person name="Grimmond S.M."/>
            <person name="Teasdale R.D."/>
            <person name="Liu E.T."/>
            <person name="Brusic V."/>
            <person name="Quackenbush J."/>
            <person name="Wahlestedt C."/>
            <person name="Mattick J.S."/>
            <person name="Hume D.A."/>
            <person name="Kai C."/>
            <person name="Sasaki D."/>
            <person name="Tomaru Y."/>
            <person name="Fukuda S."/>
            <person name="Kanamori-Katayama M."/>
            <person name="Suzuki M."/>
            <person name="Aoki J."/>
            <person name="Arakawa T."/>
            <person name="Iida J."/>
            <person name="Imamura K."/>
            <person name="Itoh M."/>
            <person name="Kato T."/>
            <person name="Kawaji H."/>
            <person name="Kawagashira N."/>
            <person name="Kawashima T."/>
            <person name="Kojima M."/>
            <person name="Kondo S."/>
            <person name="Konno H."/>
            <person name="Nakano K."/>
            <person name="Ninomiya N."/>
            <person name="Nishio T."/>
            <person name="Okada M."/>
            <person name="Plessy C."/>
            <person name="Shibata K."/>
            <person name="Shiraki T."/>
            <person name="Suzuki S."/>
            <person name="Tagami M."/>
            <person name="Waki K."/>
            <person name="Watahiki A."/>
            <person name="Okamura-Oho Y."/>
            <person name="Suzuki H."/>
            <person name="Kawai J."/>
            <person name="Hayashizaki Y."/>
        </authorList>
    </citation>
    <scope>NUCLEOTIDE SEQUENCE [LARGE SCALE MRNA]</scope>
    <source>
        <strain>C57BL/6J</strain>
        <tissue>Cerebellum</tissue>
    </source>
</reference>
<reference key="2">
    <citation type="journal article" date="2004" name="Genome Res.">
        <title>The status, quality, and expansion of the NIH full-length cDNA project: the Mammalian Gene Collection (MGC).</title>
        <authorList>
            <consortium name="The MGC Project Team"/>
        </authorList>
    </citation>
    <scope>NUCLEOTIDE SEQUENCE [LARGE SCALE MRNA]</scope>
    <source>
        <strain>C57BL/6J</strain>
        <tissue>Brain</tissue>
    </source>
</reference>
<reference key="3">
    <citation type="journal article" date="2010" name="Cell">
        <title>A tissue-specific atlas of mouse protein phosphorylation and expression.</title>
        <authorList>
            <person name="Huttlin E.L."/>
            <person name="Jedrychowski M.P."/>
            <person name="Elias J.E."/>
            <person name="Goswami T."/>
            <person name="Rad R."/>
            <person name="Beausoleil S.A."/>
            <person name="Villen J."/>
            <person name="Haas W."/>
            <person name="Sowa M.E."/>
            <person name="Gygi S.P."/>
        </authorList>
    </citation>
    <scope>IDENTIFICATION BY MASS SPECTROMETRY [LARGE SCALE ANALYSIS]</scope>
    <source>
        <tissue>Brain</tissue>
    </source>
</reference>
<reference key="4">
    <citation type="journal article" date="2010" name="EMBO J.">
        <title>Pericentrosomal targeting of Rab6 secretory vesicles by Bicaudal-D-related protein 1 (BICDR-1) regulates neuritogenesis.</title>
        <authorList>
            <person name="Schlager M.A."/>
            <person name="Kapitein L.C."/>
            <person name="Grigoriev I."/>
            <person name="Burzynski G.M."/>
            <person name="Wulf P.S."/>
            <person name="Keijzer N."/>
            <person name="de Graaff E."/>
            <person name="Fukuda M."/>
            <person name="Shepherd I.T."/>
            <person name="Akhmanova A."/>
            <person name="Hoogenraad C.C."/>
        </authorList>
    </citation>
    <scope>INTERACTION WITH BICDL1</scope>
</reference>
<keyword id="KW-0002">3D-structure</keyword>
<keyword id="KW-0968">Cytoplasmic vesicle</keyword>
<keyword id="KW-0931">ER-Golgi transport</keyword>
<keyword id="KW-0333">Golgi apparatus</keyword>
<keyword id="KW-0342">GTP-binding</keyword>
<keyword id="KW-0378">Hydrolase</keyword>
<keyword id="KW-0449">Lipoprotein</keyword>
<keyword id="KW-0460">Magnesium</keyword>
<keyword id="KW-0472">Membrane</keyword>
<keyword id="KW-0479">Metal-binding</keyword>
<keyword id="KW-0488">Methylation</keyword>
<keyword id="KW-0547">Nucleotide-binding</keyword>
<keyword id="KW-0636">Prenylation</keyword>
<keyword id="KW-0653">Protein transport</keyword>
<keyword id="KW-1185">Reference proteome</keyword>
<keyword id="KW-0813">Transport</keyword>
<feature type="chain" id="PRO_0000121116" description="Ras-related protein Rab-6B">
    <location>
        <begin position="1"/>
        <end position="208"/>
    </location>
</feature>
<feature type="short sequence motif" description="Switch 1" evidence="3">
    <location>
        <begin position="39"/>
        <end position="49"/>
    </location>
</feature>
<feature type="short sequence motif" description="Switch 2" evidence="3">
    <location>
        <begin position="71"/>
        <end position="87"/>
    </location>
</feature>
<feature type="binding site" evidence="2">
    <location>
        <position position="23"/>
    </location>
    <ligand>
        <name>GTP</name>
        <dbReference type="ChEBI" id="CHEBI:37565"/>
    </ligand>
</feature>
<feature type="binding site" evidence="2">
    <location>
        <position position="24"/>
    </location>
    <ligand>
        <name>GTP</name>
        <dbReference type="ChEBI" id="CHEBI:37565"/>
    </ligand>
</feature>
<feature type="binding site" evidence="2">
    <location>
        <position position="25"/>
    </location>
    <ligand>
        <name>GTP</name>
        <dbReference type="ChEBI" id="CHEBI:37565"/>
    </ligand>
</feature>
<feature type="binding site" evidence="2">
    <location>
        <position position="26"/>
    </location>
    <ligand>
        <name>GTP</name>
        <dbReference type="ChEBI" id="CHEBI:37565"/>
    </ligand>
</feature>
<feature type="binding site" evidence="2">
    <location>
        <position position="27"/>
    </location>
    <ligand>
        <name>GTP</name>
        <dbReference type="ChEBI" id="CHEBI:37565"/>
    </ligand>
</feature>
<feature type="binding site" evidence="3">
    <location>
        <position position="27"/>
    </location>
    <ligand>
        <name>Mg(2+)</name>
        <dbReference type="ChEBI" id="CHEBI:18420"/>
    </ligand>
</feature>
<feature type="binding site" evidence="2">
    <location>
        <position position="28"/>
    </location>
    <ligand>
        <name>GTP</name>
        <dbReference type="ChEBI" id="CHEBI:37565"/>
    </ligand>
</feature>
<feature type="binding site" evidence="2">
    <location>
        <position position="39"/>
    </location>
    <ligand>
        <name>GTP</name>
        <dbReference type="ChEBI" id="CHEBI:37565"/>
    </ligand>
</feature>
<feature type="binding site" evidence="2">
    <location>
        <position position="40"/>
    </location>
    <ligand>
        <name>GTP</name>
        <dbReference type="ChEBI" id="CHEBI:37565"/>
    </ligand>
</feature>
<feature type="binding site" evidence="2">
    <location>
        <position position="42"/>
    </location>
    <ligand>
        <name>GTP</name>
        <dbReference type="ChEBI" id="CHEBI:37565"/>
    </ligand>
</feature>
<feature type="binding site" evidence="2">
    <location>
        <position position="45"/>
    </location>
    <ligand>
        <name>GTP</name>
        <dbReference type="ChEBI" id="CHEBI:37565"/>
    </ligand>
</feature>
<feature type="binding site" evidence="3">
    <location>
        <position position="45"/>
    </location>
    <ligand>
        <name>Mg(2+)</name>
        <dbReference type="ChEBI" id="CHEBI:18420"/>
    </ligand>
</feature>
<feature type="binding site" evidence="3">
    <location>
        <position position="68"/>
    </location>
    <ligand>
        <name>Mg(2+)</name>
        <dbReference type="ChEBI" id="CHEBI:18420"/>
    </ligand>
</feature>
<feature type="binding site" evidence="2">
    <location>
        <position position="71"/>
    </location>
    <ligand>
        <name>GTP</name>
        <dbReference type="ChEBI" id="CHEBI:37565"/>
    </ligand>
</feature>
<feature type="binding site" evidence="2">
    <location>
        <position position="126"/>
    </location>
    <ligand>
        <name>GTP</name>
        <dbReference type="ChEBI" id="CHEBI:37565"/>
    </ligand>
</feature>
<feature type="binding site" evidence="2">
    <location>
        <position position="127"/>
    </location>
    <ligand>
        <name>GTP</name>
        <dbReference type="ChEBI" id="CHEBI:37565"/>
    </ligand>
</feature>
<feature type="binding site" evidence="2">
    <location>
        <position position="129"/>
    </location>
    <ligand>
        <name>GTP</name>
        <dbReference type="ChEBI" id="CHEBI:37565"/>
    </ligand>
</feature>
<feature type="binding site" evidence="2">
    <location>
        <position position="156"/>
    </location>
    <ligand>
        <name>GTP</name>
        <dbReference type="ChEBI" id="CHEBI:37565"/>
    </ligand>
</feature>
<feature type="binding site" evidence="2">
    <location>
        <position position="157"/>
    </location>
    <ligand>
        <name>GTP</name>
        <dbReference type="ChEBI" id="CHEBI:37565"/>
    </ligand>
</feature>
<feature type="binding site" evidence="2">
    <location>
        <position position="158"/>
    </location>
    <ligand>
        <name>GTP</name>
        <dbReference type="ChEBI" id="CHEBI:37565"/>
    </ligand>
</feature>
<feature type="modified residue" description="Cysteine methyl ester" evidence="1">
    <location>
        <position position="208"/>
    </location>
</feature>
<feature type="lipid moiety-binding region" description="S-geranylgeranyl cysteine" evidence="1">
    <location>
        <position position="206"/>
    </location>
</feature>
<feature type="lipid moiety-binding region" description="S-geranylgeranyl cysteine" evidence="1">
    <location>
        <position position="208"/>
    </location>
</feature>
<feature type="strand" evidence="6">
    <location>
        <begin position="11"/>
        <end position="19"/>
    </location>
</feature>
<feature type="helix" evidence="6">
    <location>
        <begin position="26"/>
        <end position="35"/>
    </location>
</feature>
<feature type="strand" evidence="6">
    <location>
        <begin position="47"/>
        <end position="57"/>
    </location>
</feature>
<feature type="strand" evidence="6">
    <location>
        <begin position="60"/>
        <end position="69"/>
    </location>
</feature>
<feature type="helix" evidence="6">
    <location>
        <begin position="73"/>
        <end position="78"/>
    </location>
</feature>
<feature type="helix" evidence="6">
    <location>
        <begin position="79"/>
        <end position="84"/>
    </location>
</feature>
<feature type="strand" evidence="6">
    <location>
        <begin position="87"/>
        <end position="94"/>
    </location>
</feature>
<feature type="helix" evidence="6">
    <location>
        <begin position="98"/>
        <end position="102"/>
    </location>
</feature>
<feature type="helix" evidence="6">
    <location>
        <begin position="104"/>
        <end position="115"/>
    </location>
</feature>
<feature type="strand" evidence="6">
    <location>
        <begin position="118"/>
        <end position="126"/>
    </location>
</feature>
<feature type="helix" evidence="6">
    <location>
        <begin position="131"/>
        <end position="133"/>
    </location>
</feature>
<feature type="helix" evidence="6">
    <location>
        <begin position="138"/>
        <end position="147"/>
    </location>
</feature>
<feature type="strand" evidence="6">
    <location>
        <begin position="151"/>
        <end position="154"/>
    </location>
</feature>
<feature type="turn" evidence="6">
    <location>
        <begin position="157"/>
        <end position="159"/>
    </location>
</feature>
<feature type="helix" evidence="6">
    <location>
        <begin position="163"/>
        <end position="173"/>
    </location>
</feature>
<dbReference type="EC" id="3.6.5.2" evidence="3"/>
<dbReference type="EMBL" id="AK035893">
    <property type="protein sequence ID" value="BAC29230.1"/>
    <property type="molecule type" value="mRNA"/>
</dbReference>
<dbReference type="EMBL" id="BC060618">
    <property type="protein sequence ID" value="AAH60618.1"/>
    <property type="molecule type" value="mRNA"/>
</dbReference>
<dbReference type="CCDS" id="CCDS23449.1"/>
<dbReference type="RefSeq" id="NP_776142.1">
    <property type="nucleotide sequence ID" value="NM_173781.4"/>
</dbReference>
<dbReference type="PDB" id="8IJ9">
    <property type="method" value="X-ray"/>
    <property type="resolution" value="2.04 A"/>
    <property type="chains" value="A/B=8-176"/>
</dbReference>
<dbReference type="PDBsum" id="8IJ9"/>
<dbReference type="SMR" id="P61294"/>
<dbReference type="BioGRID" id="234782">
    <property type="interactions" value="17"/>
</dbReference>
<dbReference type="FunCoup" id="P61294">
    <property type="interactions" value="1408"/>
</dbReference>
<dbReference type="IntAct" id="P61294">
    <property type="interactions" value="13"/>
</dbReference>
<dbReference type="MINT" id="P61294"/>
<dbReference type="STRING" id="10090.ENSMUSP00000035155"/>
<dbReference type="GlyGen" id="P61294">
    <property type="glycosylation" value="1 site, 1 O-linked glycan (1 site)"/>
</dbReference>
<dbReference type="iPTMnet" id="P61294"/>
<dbReference type="PhosphoSitePlus" id="P61294"/>
<dbReference type="SwissPalm" id="P61294"/>
<dbReference type="jPOST" id="P61294"/>
<dbReference type="PaxDb" id="10090-ENSMUSP00000035155"/>
<dbReference type="PeptideAtlas" id="P61294"/>
<dbReference type="ProteomicsDB" id="300383"/>
<dbReference type="Pumba" id="P61294"/>
<dbReference type="ABCD" id="P61294">
    <property type="antibodies" value="21 sequenced antibodies"/>
</dbReference>
<dbReference type="Antibodypedia" id="46687">
    <property type="antibodies" value="184 antibodies from 24 providers"/>
</dbReference>
<dbReference type="DNASU" id="270192"/>
<dbReference type="Ensembl" id="ENSMUST00000035155.8">
    <property type="protein sequence ID" value="ENSMUSP00000035155.7"/>
    <property type="gene ID" value="ENSMUSG00000032549.8"/>
</dbReference>
<dbReference type="GeneID" id="270192"/>
<dbReference type="KEGG" id="mmu:270192"/>
<dbReference type="UCSC" id="uc009rgf.1">
    <property type="organism name" value="mouse"/>
</dbReference>
<dbReference type="AGR" id="MGI:107283"/>
<dbReference type="CTD" id="51560"/>
<dbReference type="MGI" id="MGI:107283">
    <property type="gene designation" value="Rab6b"/>
</dbReference>
<dbReference type="VEuPathDB" id="HostDB:ENSMUSG00000032549"/>
<dbReference type="eggNOG" id="KOG0094">
    <property type="taxonomic scope" value="Eukaryota"/>
</dbReference>
<dbReference type="GeneTree" id="ENSGT00940000159656"/>
<dbReference type="HOGENOM" id="CLU_041217_10_2_1"/>
<dbReference type="InParanoid" id="P61294"/>
<dbReference type="OMA" id="NCFFRET"/>
<dbReference type="OrthoDB" id="63533at2759"/>
<dbReference type="PhylomeDB" id="P61294"/>
<dbReference type="TreeFam" id="TF300803"/>
<dbReference type="Reactome" id="R-MMU-6811436">
    <property type="pathway name" value="COPI-independent Golgi-to-ER retrograde traffic"/>
</dbReference>
<dbReference type="Reactome" id="R-MMU-6811440">
    <property type="pathway name" value="Retrograde transport at the Trans-Golgi-Network"/>
</dbReference>
<dbReference type="Reactome" id="R-MMU-8854214">
    <property type="pathway name" value="TBC/RABGAPs"/>
</dbReference>
<dbReference type="Reactome" id="R-MMU-8873719">
    <property type="pathway name" value="RAB geranylgeranylation"/>
</dbReference>
<dbReference type="Reactome" id="R-MMU-8876198">
    <property type="pathway name" value="RAB GEFs exchange GTP for GDP on RABs"/>
</dbReference>
<dbReference type="BioGRID-ORCS" id="270192">
    <property type="hits" value="0 hits in 76 CRISPR screens"/>
</dbReference>
<dbReference type="CD-CODE" id="CE726F99">
    <property type="entry name" value="Postsynaptic density"/>
</dbReference>
<dbReference type="ChiTaRS" id="Rab6b">
    <property type="organism name" value="mouse"/>
</dbReference>
<dbReference type="PRO" id="PR:P61294"/>
<dbReference type="Proteomes" id="UP000000589">
    <property type="component" value="Chromosome 9"/>
</dbReference>
<dbReference type="RNAct" id="P61294">
    <property type="molecule type" value="protein"/>
</dbReference>
<dbReference type="Bgee" id="ENSMUSG00000032549">
    <property type="expression patterns" value="Expressed in substantia nigra and 223 other cell types or tissues"/>
</dbReference>
<dbReference type="ExpressionAtlas" id="P61294">
    <property type="expression patterns" value="baseline and differential"/>
</dbReference>
<dbReference type="GO" id="GO:0036064">
    <property type="term" value="C:ciliary basal body"/>
    <property type="evidence" value="ECO:0007669"/>
    <property type="project" value="Ensembl"/>
</dbReference>
<dbReference type="GO" id="GO:0031410">
    <property type="term" value="C:cytoplasmic vesicle"/>
    <property type="evidence" value="ECO:0007669"/>
    <property type="project" value="UniProtKB-KW"/>
</dbReference>
<dbReference type="GO" id="GO:0005793">
    <property type="term" value="C:endoplasmic reticulum-Golgi intermediate compartment"/>
    <property type="evidence" value="ECO:0007669"/>
    <property type="project" value="UniProtKB-SubCell"/>
</dbReference>
<dbReference type="GO" id="GO:0000139">
    <property type="term" value="C:Golgi membrane"/>
    <property type="evidence" value="ECO:0000250"/>
    <property type="project" value="UniProtKB"/>
</dbReference>
<dbReference type="GO" id="GO:0005654">
    <property type="term" value="C:nucleoplasm"/>
    <property type="evidence" value="ECO:0007669"/>
    <property type="project" value="Ensembl"/>
</dbReference>
<dbReference type="GO" id="GO:0005525">
    <property type="term" value="F:GTP binding"/>
    <property type="evidence" value="ECO:0007669"/>
    <property type="project" value="UniProtKB-KW"/>
</dbReference>
<dbReference type="GO" id="GO:0003924">
    <property type="term" value="F:GTPase activity"/>
    <property type="evidence" value="ECO:0007669"/>
    <property type="project" value="InterPro"/>
</dbReference>
<dbReference type="GO" id="GO:0031489">
    <property type="term" value="F:myosin V binding"/>
    <property type="evidence" value="ECO:0007669"/>
    <property type="project" value="Ensembl"/>
</dbReference>
<dbReference type="GO" id="GO:0007030">
    <property type="term" value="P:Golgi organization"/>
    <property type="evidence" value="ECO:0000250"/>
    <property type="project" value="UniProtKB"/>
</dbReference>
<dbReference type="GO" id="GO:1903292">
    <property type="term" value="P:protein localization to Golgi membrane"/>
    <property type="evidence" value="ECO:0000250"/>
    <property type="project" value="UniProtKB"/>
</dbReference>
<dbReference type="GO" id="GO:0015031">
    <property type="term" value="P:protein transport"/>
    <property type="evidence" value="ECO:0007669"/>
    <property type="project" value="UniProtKB-KW"/>
</dbReference>
<dbReference type="GO" id="GO:0016192">
    <property type="term" value="P:vesicle-mediated transport"/>
    <property type="evidence" value="ECO:0007669"/>
    <property type="project" value="UniProtKB-KW"/>
</dbReference>
<dbReference type="CDD" id="cd01861">
    <property type="entry name" value="Rab6"/>
    <property type="match status" value="1"/>
</dbReference>
<dbReference type="FunFam" id="3.40.50.300:FF:001163">
    <property type="entry name" value="RAB6B, member RAS oncogene family"/>
    <property type="match status" value="1"/>
</dbReference>
<dbReference type="Gene3D" id="3.40.50.300">
    <property type="entry name" value="P-loop containing nucleotide triphosphate hydrolases"/>
    <property type="match status" value="1"/>
</dbReference>
<dbReference type="InterPro" id="IPR027417">
    <property type="entry name" value="P-loop_NTPase"/>
</dbReference>
<dbReference type="InterPro" id="IPR050227">
    <property type="entry name" value="Rab"/>
</dbReference>
<dbReference type="InterPro" id="IPR005225">
    <property type="entry name" value="Small_GTP-bd"/>
</dbReference>
<dbReference type="InterPro" id="IPR001806">
    <property type="entry name" value="Small_GTPase"/>
</dbReference>
<dbReference type="NCBIfam" id="TIGR00231">
    <property type="entry name" value="small_GTP"/>
    <property type="match status" value="1"/>
</dbReference>
<dbReference type="PANTHER" id="PTHR47977">
    <property type="entry name" value="RAS-RELATED PROTEIN RAB"/>
    <property type="match status" value="1"/>
</dbReference>
<dbReference type="Pfam" id="PF00071">
    <property type="entry name" value="Ras"/>
    <property type="match status" value="1"/>
</dbReference>
<dbReference type="PRINTS" id="PR00449">
    <property type="entry name" value="RASTRNSFRMNG"/>
</dbReference>
<dbReference type="SMART" id="SM00175">
    <property type="entry name" value="RAB"/>
    <property type="match status" value="1"/>
</dbReference>
<dbReference type="SMART" id="SM00176">
    <property type="entry name" value="RAN"/>
    <property type="match status" value="1"/>
</dbReference>
<dbReference type="SMART" id="SM00173">
    <property type="entry name" value="RAS"/>
    <property type="match status" value="1"/>
</dbReference>
<dbReference type="SMART" id="SM00174">
    <property type="entry name" value="RHO"/>
    <property type="match status" value="1"/>
</dbReference>
<dbReference type="SUPFAM" id="SSF52540">
    <property type="entry name" value="P-loop containing nucleoside triphosphate hydrolases"/>
    <property type="match status" value="1"/>
</dbReference>
<dbReference type="PROSITE" id="PS51419">
    <property type="entry name" value="RAB"/>
    <property type="match status" value="1"/>
</dbReference>